<feature type="signal peptide" evidence="2">
    <location>
        <begin position="1"/>
        <end position="24"/>
    </location>
</feature>
<feature type="chain" id="PRO_0000027341" description="Penicillin G acylase">
    <location>
        <begin position="25"/>
        <end position="802"/>
    </location>
</feature>
<feature type="chain" id="PRO_0000027342" description="Penicillin G acylase subunit alpha">
    <location>
        <begin position="25"/>
        <end position="234"/>
    </location>
</feature>
<feature type="propeptide" id="PRO_0000027343" description="Spacer peptide">
    <location>
        <begin position="235"/>
        <end position="265"/>
    </location>
</feature>
<feature type="chain" id="PRO_0000027344" description="Penicillin G acylase subunit beta">
    <location>
        <begin position="266"/>
        <end position="802"/>
    </location>
</feature>
<feature type="active site" description="Nucleophile" evidence="1">
    <location>
        <position position="266"/>
    </location>
</feature>
<feature type="binding site" evidence="2">
    <location>
        <position position="177"/>
    </location>
    <ligand>
        <name>Ca(2+)</name>
        <dbReference type="ChEBI" id="CHEBI:29108"/>
    </ligand>
</feature>
<feature type="binding site" evidence="2">
    <location>
        <position position="341"/>
    </location>
    <ligand>
        <name>Ca(2+)</name>
        <dbReference type="ChEBI" id="CHEBI:29108"/>
    </ligand>
</feature>
<feature type="sequence variant" description="In strain: CA4098.">
    <original>T</original>
    <variation>M</variation>
    <location>
        <position position="3"/>
    </location>
</feature>
<feature type="sequence variant" description="In strain: CA4098.">
    <original>D</original>
    <variation>E</variation>
    <location>
        <position position="224"/>
    </location>
</feature>
<feature type="sequence variant" description="In strain: CA4098.">
    <original>I</original>
    <variation>K</variation>
    <location>
        <position position="232"/>
    </location>
</feature>
<feature type="sequence variant" description="In strain: CA4098.">
    <original>T</original>
    <variation>S</variation>
    <location>
        <position position="254"/>
    </location>
</feature>
<feature type="sequence variant" description="In strain: CA4098.">
    <original>A</original>
    <variation>T</variation>
    <location>
        <position position="349"/>
    </location>
</feature>
<feature type="sequence variant" description="In strain: CA4098.">
    <original>S</original>
    <variation>N</variation>
    <location>
        <position position="470"/>
    </location>
</feature>
<feature type="sequence variant" description="In strain: CA4098.">
    <original>F</original>
    <variation>Y</variation>
    <location>
        <position position="524"/>
    </location>
</feature>
<feature type="sequence variant" description="In strain: CA4098.">
    <original>Q</original>
    <variation>P</variation>
    <location>
        <position position="569"/>
    </location>
</feature>
<feature type="sequence variant" description="In strain: CA4098.">
    <original>I</original>
    <variation>A</variation>
    <location>
        <position position="586"/>
    </location>
</feature>
<feature type="sequence variant" description="In strain: CA4098.">
    <original>N</original>
    <variation>S</variation>
    <location>
        <position position="657"/>
    </location>
</feature>
<feature type="sequence variant" description="In strain: CA4098.">
    <original>T</original>
    <variation>K</variation>
    <location>
        <position position="740"/>
    </location>
</feature>
<feature type="sequence variant" description="In strain: CA4098.">
    <original>NKA</original>
    <variation>YKS</variation>
    <location>
        <begin position="789"/>
        <end position="791"/>
    </location>
</feature>
<feature type="strand" evidence="4">
    <location>
        <begin position="33"/>
        <end position="36"/>
    </location>
</feature>
<feature type="strand" evidence="4">
    <location>
        <begin position="42"/>
        <end position="45"/>
    </location>
</feature>
<feature type="helix" evidence="4">
    <location>
        <begin position="49"/>
        <end position="76"/>
    </location>
</feature>
<feature type="helix" evidence="4">
    <location>
        <begin position="80"/>
        <end position="83"/>
    </location>
</feature>
<feature type="helix" evidence="4">
    <location>
        <begin position="85"/>
        <end position="87"/>
    </location>
</feature>
<feature type="helix" evidence="4">
    <location>
        <begin position="88"/>
        <end position="96"/>
    </location>
</feature>
<feature type="helix" evidence="4">
    <location>
        <begin position="101"/>
        <end position="109"/>
    </location>
</feature>
<feature type="helix" evidence="4">
    <location>
        <begin position="113"/>
        <end position="135"/>
    </location>
</feature>
<feature type="helix" evidence="4">
    <location>
        <begin position="137"/>
        <end position="140"/>
    </location>
</feature>
<feature type="helix" evidence="4">
    <location>
        <begin position="143"/>
        <end position="147"/>
    </location>
</feature>
<feature type="helix" evidence="4">
    <location>
        <begin position="157"/>
        <end position="168"/>
    </location>
</feature>
<feature type="helix" evidence="4">
    <location>
        <begin position="169"/>
        <end position="171"/>
    </location>
</feature>
<feature type="helix" evidence="4">
    <location>
        <begin position="176"/>
        <end position="203"/>
    </location>
</feature>
<feature type="strand" evidence="4">
    <location>
        <begin position="267"/>
        <end position="271"/>
    </location>
</feature>
<feature type="turn" evidence="4">
    <location>
        <begin position="273"/>
        <end position="275"/>
    </location>
</feature>
<feature type="strand" evidence="4">
    <location>
        <begin position="276"/>
        <end position="280"/>
    </location>
</feature>
<feature type="strand" evidence="4">
    <location>
        <begin position="282"/>
        <end position="286"/>
    </location>
</feature>
<feature type="strand" evidence="4">
    <location>
        <begin position="292"/>
        <end position="294"/>
    </location>
</feature>
<feature type="strand" evidence="4">
    <location>
        <begin position="296"/>
        <end position="304"/>
    </location>
</feature>
<feature type="strand" evidence="4">
    <location>
        <begin position="307"/>
        <end position="314"/>
    </location>
</feature>
<feature type="strand" evidence="4">
    <location>
        <begin position="321"/>
        <end position="334"/>
    </location>
</feature>
<feature type="strand" evidence="4">
    <location>
        <begin position="340"/>
        <end position="348"/>
    </location>
</feature>
<feature type="strand" evidence="4">
    <location>
        <begin position="351"/>
        <end position="356"/>
    </location>
</feature>
<feature type="strand" evidence="4">
    <location>
        <begin position="358"/>
        <end position="363"/>
    </location>
</feature>
<feature type="strand" evidence="4">
    <location>
        <begin position="365"/>
        <end position="374"/>
    </location>
</feature>
<feature type="strand" evidence="4">
    <location>
        <begin position="378"/>
        <end position="389"/>
    </location>
</feature>
<feature type="strand" evidence="4">
    <location>
        <begin position="391"/>
        <end position="399"/>
    </location>
</feature>
<feature type="turn" evidence="4">
    <location>
        <begin position="400"/>
        <end position="403"/>
    </location>
</feature>
<feature type="strand" evidence="4">
    <location>
        <begin position="404"/>
        <end position="410"/>
    </location>
</feature>
<feature type="turn" evidence="4">
    <location>
        <begin position="411"/>
        <end position="414"/>
    </location>
</feature>
<feature type="helix" evidence="4">
    <location>
        <begin position="416"/>
        <end position="428"/>
    </location>
</feature>
<feature type="helix" evidence="4">
    <location>
        <begin position="432"/>
        <end position="441"/>
    </location>
</feature>
<feature type="strand" evidence="4">
    <location>
        <begin position="446"/>
        <end position="452"/>
    </location>
</feature>
<feature type="strand" evidence="4">
    <location>
        <begin position="457"/>
        <end position="460"/>
    </location>
</feature>
<feature type="strand" evidence="4">
    <location>
        <begin position="481"/>
        <end position="484"/>
    </location>
</feature>
<feature type="helix" evidence="4">
    <location>
        <begin position="492"/>
        <end position="494"/>
    </location>
</feature>
<feature type="strand" evidence="4">
    <location>
        <begin position="495"/>
        <end position="500"/>
    </location>
</feature>
<feature type="strand" evidence="4">
    <location>
        <begin position="504"/>
        <end position="510"/>
    </location>
</feature>
<feature type="strand" evidence="4">
    <location>
        <begin position="512"/>
        <end position="514"/>
    </location>
</feature>
<feature type="helix" evidence="4">
    <location>
        <begin position="520"/>
        <end position="525"/>
    </location>
</feature>
<feature type="strand" evidence="4">
    <location>
        <begin position="526"/>
        <end position="529"/>
    </location>
</feature>
<feature type="helix" evidence="4">
    <location>
        <begin position="533"/>
        <end position="541"/>
    </location>
</feature>
<feature type="strand" evidence="4">
    <location>
        <begin position="542"/>
        <end position="545"/>
    </location>
</feature>
<feature type="helix" evidence="4">
    <location>
        <begin position="547"/>
        <end position="559"/>
    </location>
</feature>
<feature type="helix" evidence="4">
    <location>
        <begin position="562"/>
        <end position="577"/>
    </location>
</feature>
<feature type="turn" evidence="4">
    <location>
        <begin position="578"/>
        <end position="581"/>
    </location>
</feature>
<feature type="helix" evidence="4">
    <location>
        <begin position="584"/>
        <end position="594"/>
    </location>
</feature>
<feature type="strand" evidence="4">
    <location>
        <begin position="605"/>
        <end position="607"/>
    </location>
</feature>
<feature type="helix" evidence="4">
    <location>
        <begin position="611"/>
        <end position="632"/>
    </location>
</feature>
<feature type="helix" evidence="4">
    <location>
        <begin position="633"/>
        <end position="635"/>
    </location>
</feature>
<feature type="helix" evidence="4">
    <location>
        <begin position="636"/>
        <end position="643"/>
    </location>
</feature>
<feature type="helix" evidence="4">
    <location>
        <begin position="650"/>
        <end position="656"/>
    </location>
</feature>
<feature type="helix" evidence="4">
    <location>
        <begin position="670"/>
        <end position="688"/>
    </location>
</feature>
<feature type="helix" evidence="4">
    <location>
        <begin position="693"/>
        <end position="696"/>
    </location>
</feature>
<feature type="strand" evidence="4">
    <location>
        <begin position="706"/>
        <end position="708"/>
    </location>
</feature>
<feature type="strand" evidence="4">
    <location>
        <begin position="730"/>
        <end position="738"/>
    </location>
</feature>
<feature type="strand" evidence="4">
    <location>
        <begin position="741"/>
        <end position="747"/>
    </location>
</feature>
<feature type="helix" evidence="4">
    <location>
        <begin position="770"/>
        <end position="774"/>
    </location>
</feature>
<feature type="helix" evidence="4">
    <location>
        <begin position="785"/>
        <end position="791"/>
    </location>
</feature>
<comment type="catalytic activity">
    <reaction>
        <text>a penicillin + H2O = 6-aminopenicillanate + a carboxylate</text>
        <dbReference type="Rhea" id="RHEA:18693"/>
        <dbReference type="ChEBI" id="CHEBI:15377"/>
        <dbReference type="ChEBI" id="CHEBI:29067"/>
        <dbReference type="ChEBI" id="CHEBI:51356"/>
        <dbReference type="ChEBI" id="CHEBI:57869"/>
        <dbReference type="EC" id="3.5.1.11"/>
    </reaction>
</comment>
<comment type="cofactor">
    <cofactor evidence="3">
        <name>Ca(2+)</name>
        <dbReference type="ChEBI" id="CHEBI:29108"/>
    </cofactor>
    <text evidence="3">Binds 1 Ca(2+) ion per subunit.</text>
</comment>
<comment type="subunit">
    <text evidence="1">Heterodimer of an alpha subunit and a beta subunit processed from the same precursor.</text>
</comment>
<comment type="subcellular location">
    <subcellularLocation>
        <location evidence="3">Secreted</location>
    </subcellularLocation>
</comment>
<comment type="similarity">
    <text evidence="3">Belongs to the peptidase S45 family.</text>
</comment>
<evidence type="ECO:0000250" key="1"/>
<evidence type="ECO:0000255" key="2"/>
<evidence type="ECO:0000305" key="3"/>
<evidence type="ECO:0007829" key="4">
    <source>
        <dbReference type="PDB" id="6NVW"/>
    </source>
</evidence>
<protein>
    <recommendedName>
        <fullName>Penicillin G acylase</fullName>
        <ecNumber>3.5.1.11</ecNumber>
    </recommendedName>
    <alternativeName>
        <fullName>Penicillin G amidase</fullName>
    </alternativeName>
    <alternativeName>
        <fullName>Penicillin G amidohydrolase</fullName>
    </alternativeName>
    <component>
        <recommendedName>
            <fullName>Penicillin G acylase subunit alpha</fullName>
        </recommendedName>
    </component>
    <component>
        <recommendedName>
            <fullName>Penicillin G acylase subunit beta</fullName>
        </recommendedName>
    </component>
</protein>
<keyword id="KW-0002">3D-structure</keyword>
<keyword id="KW-0046">Antibiotic resistance</keyword>
<keyword id="KW-0106">Calcium</keyword>
<keyword id="KW-0378">Hydrolase</keyword>
<keyword id="KW-0479">Metal-binding</keyword>
<keyword id="KW-0964">Secreted</keyword>
<keyword id="KW-0732">Signal</keyword>
<keyword id="KW-0865">Zymogen</keyword>
<reference key="1">
    <citation type="journal article" date="1994" name="Misainmurhag Hoiji">
        <title>Nucleotide sequence of the penicillin G acylase gene from Bacillus megaterium and characteristics of the enzyme.</title>
        <authorList>
            <person name="Kang J.H."/>
            <person name="Kim S.J."/>
            <person name="Park Y.C."/>
            <person name="Hwang Y."/>
            <person name="Yoo O.J."/>
            <person name="Kim Y.C."/>
        </authorList>
    </citation>
    <scope>NUCLEOTIDE SEQUENCE [GENOMIC DNA]</scope>
    <source>
        <strain>ATCC 14945 / NBRC 13498 / 3781</strain>
    </source>
</reference>
<reference key="2">
    <citation type="journal article" date="1995" name="FEMS Microbiol. Lett.">
        <title>Cloning and sequencing of the pac gene encoding the penicillin G acylase of Bacillus megaterium ATCC 14945.</title>
        <authorList>
            <person name="Martin L.M."/>
            <person name="Prieto A.M."/>
            <person name="Cortes E."/>
            <person name="Garcia J.L."/>
        </authorList>
    </citation>
    <scope>NUCLEOTIDE SEQUENCE [GENOMIC DNA]</scope>
    <source>
        <strain>ATCC 14945 / NBRC 13498 / 3781</strain>
    </source>
</reference>
<reference key="3">
    <citation type="journal article" date="1999" name="Sheng Wu Hua Xue Yu Sheng Wu Wu Li Xue Bao">
        <title>High expression of penicillin G acylase gene from Bacillus megaterium in Bacillus subtilis.</title>
        <authorList>
            <person name="Yang S."/>
            <person name="Huang Y.H."/>
            <person name="Huang X.D."/>
            <person name="Li S.Y."/>
            <person name="Yuan Z.Y."/>
        </authorList>
    </citation>
    <scope>NUCLEOTIDE SEQUENCE [GENOMIC DNA]</scope>
    <source>
        <strain>CA4098</strain>
    </source>
</reference>
<organism>
    <name type="scientific">Priestia megaterium</name>
    <name type="common">Bacillus megaterium</name>
    <dbReference type="NCBI Taxonomy" id="1404"/>
    <lineage>
        <taxon>Bacteria</taxon>
        <taxon>Bacillati</taxon>
        <taxon>Bacillota</taxon>
        <taxon>Bacilli</taxon>
        <taxon>Bacillales</taxon>
        <taxon>Bacillaceae</taxon>
        <taxon>Priestia</taxon>
    </lineage>
</organism>
<dbReference type="EC" id="3.5.1.11"/>
<dbReference type="EMBL" id="U07682">
    <property type="protein sequence ID" value="AAB41343.1"/>
    <property type="molecule type" value="Unassigned_DNA"/>
</dbReference>
<dbReference type="EMBL" id="Z37542">
    <property type="protein sequence ID" value="CAA85774.1"/>
    <property type="molecule type" value="Genomic_DNA"/>
</dbReference>
<dbReference type="EMBL" id="AF161313">
    <property type="protein sequence ID" value="AAD45609.1"/>
    <property type="molecule type" value="Genomic_DNA"/>
</dbReference>
<dbReference type="PIR" id="S49252">
    <property type="entry name" value="S49252"/>
</dbReference>
<dbReference type="PDB" id="6NVW">
    <property type="method" value="X-ray"/>
    <property type="resolution" value="2.20 A"/>
    <property type="chains" value="A=25-234, B=266-802"/>
</dbReference>
<dbReference type="PDBsum" id="6NVW"/>
<dbReference type="SMR" id="Q60136"/>
<dbReference type="MEROPS" id="S45.001"/>
<dbReference type="BRENDA" id="3.5.1.11">
    <property type="organism ID" value="656"/>
</dbReference>
<dbReference type="GO" id="GO:0005576">
    <property type="term" value="C:extracellular region"/>
    <property type="evidence" value="ECO:0007669"/>
    <property type="project" value="UniProtKB-SubCell"/>
</dbReference>
<dbReference type="GO" id="GO:0046872">
    <property type="term" value="F:metal ion binding"/>
    <property type="evidence" value="ECO:0007669"/>
    <property type="project" value="UniProtKB-KW"/>
</dbReference>
<dbReference type="GO" id="GO:0008953">
    <property type="term" value="F:penicillin amidase activity"/>
    <property type="evidence" value="ECO:0007669"/>
    <property type="project" value="UniProtKB-EC"/>
</dbReference>
<dbReference type="GO" id="GO:0017000">
    <property type="term" value="P:antibiotic biosynthetic process"/>
    <property type="evidence" value="ECO:0007669"/>
    <property type="project" value="InterPro"/>
</dbReference>
<dbReference type="GO" id="GO:0046677">
    <property type="term" value="P:response to antibiotic"/>
    <property type="evidence" value="ECO:0007669"/>
    <property type="project" value="UniProtKB-KW"/>
</dbReference>
<dbReference type="CDD" id="cd03748">
    <property type="entry name" value="Ntn_PGA"/>
    <property type="match status" value="1"/>
</dbReference>
<dbReference type="Gene3D" id="1.10.1400.10">
    <property type="match status" value="1"/>
</dbReference>
<dbReference type="Gene3D" id="1.10.287.150">
    <property type="match status" value="1"/>
</dbReference>
<dbReference type="Gene3D" id="2.30.120.10">
    <property type="match status" value="1"/>
</dbReference>
<dbReference type="Gene3D" id="3.60.20.10">
    <property type="entry name" value="Glutamine Phosphoribosylpyrophosphate, subunit 1, domain 1"/>
    <property type="match status" value="1"/>
</dbReference>
<dbReference type="Gene3D" id="1.10.439.10">
    <property type="entry name" value="Penicillin Amidohydrolase, domain 1"/>
    <property type="match status" value="1"/>
</dbReference>
<dbReference type="InterPro" id="IPR029055">
    <property type="entry name" value="Ntn_hydrolases_N"/>
</dbReference>
<dbReference type="InterPro" id="IPR014395">
    <property type="entry name" value="Pen/GL7ACA/AHL_acylase"/>
</dbReference>
<dbReference type="InterPro" id="IPR043147">
    <property type="entry name" value="Penicillin_amidase_A-knob"/>
</dbReference>
<dbReference type="InterPro" id="IPR023343">
    <property type="entry name" value="Penicillin_amidase_dom1"/>
</dbReference>
<dbReference type="InterPro" id="IPR043146">
    <property type="entry name" value="Penicillin_amidase_N_B-knob"/>
</dbReference>
<dbReference type="InterPro" id="IPR033813">
    <property type="entry name" value="PGA_C"/>
</dbReference>
<dbReference type="InterPro" id="IPR002692">
    <property type="entry name" value="S45"/>
</dbReference>
<dbReference type="PANTHER" id="PTHR34218:SF3">
    <property type="entry name" value="ACYL-HOMOSERINE LACTONE ACYLASE PVDQ"/>
    <property type="match status" value="1"/>
</dbReference>
<dbReference type="PANTHER" id="PTHR34218">
    <property type="entry name" value="PEPTIDASE S45 PENICILLIN AMIDASE"/>
    <property type="match status" value="1"/>
</dbReference>
<dbReference type="Pfam" id="PF01804">
    <property type="entry name" value="Penicil_amidase"/>
    <property type="match status" value="1"/>
</dbReference>
<dbReference type="PIRSF" id="PIRSF001227">
    <property type="entry name" value="Pen_acylase"/>
    <property type="match status" value="1"/>
</dbReference>
<dbReference type="SUPFAM" id="SSF56235">
    <property type="entry name" value="N-terminal nucleophile aminohydrolases (Ntn hydrolases)"/>
    <property type="match status" value="1"/>
</dbReference>
<sequence length="802" mass="91988">MKTKWLISVIILFVFIFPQNLVFAGEDKNEGVKVVRDNFGVPHLYAKNKKDLYEAYGYVMAKDRLFQLEMFRRGNEGTVSEIFGEDYLSKDEQSRRDGYSNKEIKKMIDGLDRQPKELIAKFAEGISRYVNEALKDPDDKLSKEFHEYQFLPQKWTSTDVVRVYMVSMTYFMDNHQELKNAEILAKLEHEYGTEVSRKMFDDLVWKNDPSAPTSIVSEGKPKRDSSSQSLQILSSAVIKASEKVGKERENFVQTSEELGLPLKIGSNAAIVGSEKSATGNALLFSGPQVGFVAPGFLYEVGLHAPGFDMEGSGFIGYPFIMFGANNHFALSATAGYGNVTDIFEEKLNAKNSSQYLYKGKWRDMEKRKESFTVKGDNGEKKTVEKIYYRTVHGPVISRDETNKVAYSKSWSFRGTEAQSMSAYMKANWAKNLKEFENAASEYTMSLNWYYADKKGDIAYYHVGRYPVRNSKIDERIPTPGTGEYEWKGFIPFKENPHVINPKNGYVVNWNNKPSKEWVNGEYSFYWGEDNRVQQYINGMEARGKVTLEDINEINYTASFAQLRANLFKQLLIDVLDKNKSTNGNYIYLIEKLEEWNNLKEDENKDGYYDAGIAAFFDEWWNNLHDKLFMDELGDFYGITKEITDHRYGASLAYKILNKESTNYKWVNVDQEKIIMESTNEVLAKLQSEKGLKAEKWRMPIKTMTFGEKSLIGIPHGYGSMTPIIEMNRGSENHYIEMTPTGPSGFNITPPGQIGFVKKDGTISDHYDDQLVMFAEWKFKPYLFNKKDINKAAKNVSALNMSK</sequence>
<gene>
    <name type="primary">pac</name>
    <name type="synonym">pga</name>
</gene>
<proteinExistence type="evidence at protein level"/>
<name>PAC_PRIMG</name>
<accession>Q60136</accession>
<accession>Q9S463</accession>